<sequence>MPRENQKRGRRATEKAKKEASKRKRDEGIEEPTLKRLKPSADEDNAVTAGADYVPLEGEEYDDQYATGAADEMPFYGLLDSEEQEYFSRANEMLELNQFGDAEERRLFVDSVFREARGKELKIACSQSCSRLMEKLISVSDIHQIWRLFNKFIGHFLTLVQHRFASHCCERLFISAAPGVTQKASKTKSKKDDDIEMDEDEEPEPELPLAEMFMKVVEELQGNWGYLLTERFASHTIRVLLLVLAGEPVDVSSNDSVVASRKKERLGVVGGETQENNPSGEKRSVPESFEATLKKVMQDMVSVLDDTYLRALATHPVGNPVLQVLVRLELSHFGKSSAKQPTSIIKRLIPDENFEDDSETTRFIRGLLYDPVGSRLLETMVRCMPGKMFKSLYRNYLRDQMSSLARNQTAGYVVLRVLERLGRDDLHAVMEQIVPKIPSLIERSRTIVPKVLIERCLARGVDTKPIAKALESSYDSDPARRLEQMLRLETAMADNKEKSDKNGPPGESNPGSAAAEKLHGSLLAQTIVTAPGQLSELVFSSLLALSPEVLLSICKDPTASRVIQQALTSPASSPQFRRQFTTRFTSHMNELALDSSGSHVVDALWPATKDIYFIKERMAQELAQNELALRDSFVGRAVWRNWAMDLYKRRRGEWAAKAKGRDITNDSAEKPKSRLDMARARYAAKQSEATGANAVAAKQ</sequence>
<evidence type="ECO:0000250" key="1"/>
<evidence type="ECO:0000256" key="2">
    <source>
        <dbReference type="SAM" id="MobiDB-lite"/>
    </source>
</evidence>
<evidence type="ECO:0000305" key="3"/>
<protein>
    <recommendedName>
        <fullName>Nucleolar protein 9</fullName>
    </recommendedName>
    <alternativeName>
        <fullName>Pumilio domain-containing protein nop9</fullName>
    </alternativeName>
</protein>
<accession>Q5B3J5</accession>
<accession>C8V9T4</accession>
<dbReference type="EMBL" id="AACD01000084">
    <property type="protein sequence ID" value="EAA60963.1"/>
    <property type="status" value="ALT_SEQ"/>
    <property type="molecule type" value="Genomic_DNA"/>
</dbReference>
<dbReference type="EMBL" id="BN001303">
    <property type="protein sequence ID" value="CBF76553.1"/>
    <property type="molecule type" value="Genomic_DNA"/>
</dbReference>
<dbReference type="RefSeq" id="XP_662489.1">
    <property type="nucleotide sequence ID" value="XM_657397.1"/>
</dbReference>
<dbReference type="SMR" id="Q5B3J5"/>
<dbReference type="FunCoup" id="Q5B3J5">
    <property type="interactions" value="889"/>
</dbReference>
<dbReference type="STRING" id="227321.Q5B3J5"/>
<dbReference type="EnsemblFungi" id="CBF76553">
    <property type="protein sequence ID" value="CBF76553"/>
    <property type="gene ID" value="ANIA_10618"/>
</dbReference>
<dbReference type="VEuPathDB" id="FungiDB:AN10618"/>
<dbReference type="eggNOG" id="KOG2188">
    <property type="taxonomic scope" value="Eukaryota"/>
</dbReference>
<dbReference type="HOGENOM" id="CLU_002310_0_0_1"/>
<dbReference type="InParanoid" id="Q5B3J5"/>
<dbReference type="OMA" id="HHLVRNF"/>
<dbReference type="OrthoDB" id="392571at2759"/>
<dbReference type="Proteomes" id="UP000000560">
    <property type="component" value="Chromosome III"/>
</dbReference>
<dbReference type="GO" id="GO:0030686">
    <property type="term" value="C:90S preribosome"/>
    <property type="evidence" value="ECO:0000318"/>
    <property type="project" value="GO_Central"/>
</dbReference>
<dbReference type="GO" id="GO:0005730">
    <property type="term" value="C:nucleolus"/>
    <property type="evidence" value="ECO:0000318"/>
    <property type="project" value="GO_Central"/>
</dbReference>
<dbReference type="GO" id="GO:0030688">
    <property type="term" value="C:preribosome, small subunit precursor"/>
    <property type="evidence" value="ECO:0000318"/>
    <property type="project" value="GO_Central"/>
</dbReference>
<dbReference type="GO" id="GO:0003723">
    <property type="term" value="F:RNA binding"/>
    <property type="evidence" value="ECO:0000318"/>
    <property type="project" value="GO_Central"/>
</dbReference>
<dbReference type="GO" id="GO:0000480">
    <property type="term" value="P:endonucleolytic cleavage in 5'-ETS of tricistronic rRNA transcript (SSU-rRNA, 5.8S rRNA, LSU-rRNA)"/>
    <property type="evidence" value="ECO:0000318"/>
    <property type="project" value="GO_Central"/>
</dbReference>
<dbReference type="GO" id="GO:0000447">
    <property type="term" value="P:endonucleolytic cleavage in ITS1 to separate SSU-rRNA from 5.8S rRNA and LSU-rRNA from tricistronic rRNA transcript (SSU-rRNA, 5.8S rRNA, LSU-rRNA)"/>
    <property type="evidence" value="ECO:0000318"/>
    <property type="project" value="GO_Central"/>
</dbReference>
<dbReference type="GO" id="GO:0000472">
    <property type="term" value="P:endonucleolytic cleavage to generate mature 5'-end of SSU-rRNA from (SSU-rRNA, 5.8S rRNA, LSU-rRNA)"/>
    <property type="evidence" value="ECO:0000318"/>
    <property type="project" value="GO_Central"/>
</dbReference>
<dbReference type="GO" id="GO:0000056">
    <property type="term" value="P:ribosomal small subunit export from nucleus"/>
    <property type="evidence" value="ECO:0000318"/>
    <property type="project" value="GO_Central"/>
</dbReference>
<dbReference type="Gene3D" id="1.25.10.10">
    <property type="entry name" value="Leucine-rich Repeat Variant"/>
    <property type="match status" value="2"/>
</dbReference>
<dbReference type="InterPro" id="IPR011989">
    <property type="entry name" value="ARM-like"/>
</dbReference>
<dbReference type="InterPro" id="IPR016024">
    <property type="entry name" value="ARM-type_fold"/>
</dbReference>
<dbReference type="InterPro" id="IPR040000">
    <property type="entry name" value="NOP9"/>
</dbReference>
<dbReference type="InterPro" id="IPR001313">
    <property type="entry name" value="Pumilio_RNA-bd_rpt"/>
</dbReference>
<dbReference type="PANTHER" id="PTHR13102">
    <property type="entry name" value="NUCLEOLAR PROTEIN 9"/>
    <property type="match status" value="1"/>
</dbReference>
<dbReference type="PANTHER" id="PTHR13102:SF0">
    <property type="entry name" value="NUCLEOLAR PROTEIN 9"/>
    <property type="match status" value="1"/>
</dbReference>
<dbReference type="Pfam" id="PF22493">
    <property type="entry name" value="PUF_NOP9"/>
    <property type="match status" value="1"/>
</dbReference>
<dbReference type="SMART" id="SM00025">
    <property type="entry name" value="Pumilio"/>
    <property type="match status" value="6"/>
</dbReference>
<dbReference type="SUPFAM" id="SSF48371">
    <property type="entry name" value="ARM repeat"/>
    <property type="match status" value="1"/>
</dbReference>
<proteinExistence type="inferred from homology"/>
<gene>
    <name type="primary">nop9</name>
    <name type="ORF">AN10618</name>
</gene>
<name>NOP9_EMENI</name>
<feature type="chain" id="PRO_0000407813" description="Nucleolar protein 9">
    <location>
        <begin position="1"/>
        <end position="699"/>
    </location>
</feature>
<feature type="repeat" description="Pumilio 1">
    <location>
        <begin position="115"/>
        <end position="150"/>
    </location>
</feature>
<feature type="repeat" description="Pumilio 2">
    <location>
        <begin position="151"/>
        <end position="186"/>
    </location>
</feature>
<feature type="repeat" description="Pumilio 3">
    <location>
        <begin position="359"/>
        <end position="394"/>
    </location>
</feature>
<feature type="repeat" description="Pumilio 4">
    <location>
        <begin position="396"/>
        <end position="431"/>
    </location>
</feature>
<feature type="repeat" description="Pumilio 5">
    <location>
        <begin position="544"/>
        <end position="581"/>
    </location>
</feature>
<feature type="repeat" description="Pumilio 6">
    <location>
        <begin position="583"/>
        <end position="620"/>
    </location>
</feature>
<feature type="region of interest" description="Disordered" evidence="2">
    <location>
        <begin position="1"/>
        <end position="47"/>
    </location>
</feature>
<feature type="region of interest" description="Disordered" evidence="2">
    <location>
        <begin position="184"/>
        <end position="204"/>
    </location>
</feature>
<feature type="region of interest" description="Disordered" evidence="2">
    <location>
        <begin position="494"/>
        <end position="514"/>
    </location>
</feature>
<feature type="compositionally biased region" description="Basic and acidic residues" evidence="2">
    <location>
        <begin position="1"/>
        <end position="27"/>
    </location>
</feature>
<feature type="compositionally biased region" description="Acidic residues" evidence="2">
    <location>
        <begin position="194"/>
        <end position="204"/>
    </location>
</feature>
<organism>
    <name type="scientific">Emericella nidulans (strain FGSC A4 / ATCC 38163 / CBS 112.46 / NRRL 194 / M139)</name>
    <name type="common">Aspergillus nidulans</name>
    <dbReference type="NCBI Taxonomy" id="227321"/>
    <lineage>
        <taxon>Eukaryota</taxon>
        <taxon>Fungi</taxon>
        <taxon>Dikarya</taxon>
        <taxon>Ascomycota</taxon>
        <taxon>Pezizomycotina</taxon>
        <taxon>Eurotiomycetes</taxon>
        <taxon>Eurotiomycetidae</taxon>
        <taxon>Eurotiales</taxon>
        <taxon>Aspergillaceae</taxon>
        <taxon>Aspergillus</taxon>
        <taxon>Aspergillus subgen. Nidulantes</taxon>
    </lineage>
</organism>
<reference key="1">
    <citation type="journal article" date="2005" name="Nature">
        <title>Sequencing of Aspergillus nidulans and comparative analysis with A. fumigatus and A. oryzae.</title>
        <authorList>
            <person name="Galagan J.E."/>
            <person name="Calvo S.E."/>
            <person name="Cuomo C."/>
            <person name="Ma L.-J."/>
            <person name="Wortman J.R."/>
            <person name="Batzoglou S."/>
            <person name="Lee S.-I."/>
            <person name="Bastuerkmen M."/>
            <person name="Spevak C.C."/>
            <person name="Clutterbuck J."/>
            <person name="Kapitonov V."/>
            <person name="Jurka J."/>
            <person name="Scazzocchio C."/>
            <person name="Farman M.L."/>
            <person name="Butler J."/>
            <person name="Purcell S."/>
            <person name="Harris S."/>
            <person name="Braus G.H."/>
            <person name="Draht O."/>
            <person name="Busch S."/>
            <person name="D'Enfert C."/>
            <person name="Bouchier C."/>
            <person name="Goldman G.H."/>
            <person name="Bell-Pedersen D."/>
            <person name="Griffiths-Jones S."/>
            <person name="Doonan J.H."/>
            <person name="Yu J."/>
            <person name="Vienken K."/>
            <person name="Pain A."/>
            <person name="Freitag M."/>
            <person name="Selker E.U."/>
            <person name="Archer D.B."/>
            <person name="Penalva M.A."/>
            <person name="Oakley B.R."/>
            <person name="Momany M."/>
            <person name="Tanaka T."/>
            <person name="Kumagai T."/>
            <person name="Asai K."/>
            <person name="Machida M."/>
            <person name="Nierman W.C."/>
            <person name="Denning D.W."/>
            <person name="Caddick M.X."/>
            <person name="Hynes M."/>
            <person name="Paoletti M."/>
            <person name="Fischer R."/>
            <person name="Miller B.L."/>
            <person name="Dyer P.S."/>
            <person name="Sachs M.S."/>
            <person name="Osmani S.A."/>
            <person name="Birren B.W."/>
        </authorList>
    </citation>
    <scope>NUCLEOTIDE SEQUENCE [LARGE SCALE GENOMIC DNA]</scope>
    <source>
        <strain>FGSC A4 / ATCC 38163 / CBS 112.46 / NRRL 194 / M139</strain>
    </source>
</reference>
<reference key="2">
    <citation type="journal article" date="2009" name="Fungal Genet. Biol.">
        <title>The 2008 update of the Aspergillus nidulans genome annotation: a community effort.</title>
        <authorList>
            <person name="Wortman J.R."/>
            <person name="Gilsenan J.M."/>
            <person name="Joardar V."/>
            <person name="Deegan J."/>
            <person name="Clutterbuck J."/>
            <person name="Andersen M.R."/>
            <person name="Archer D."/>
            <person name="Bencina M."/>
            <person name="Braus G."/>
            <person name="Coutinho P."/>
            <person name="von Dohren H."/>
            <person name="Doonan J."/>
            <person name="Driessen A.J."/>
            <person name="Durek P."/>
            <person name="Espeso E."/>
            <person name="Fekete E."/>
            <person name="Flipphi M."/>
            <person name="Estrada C.G."/>
            <person name="Geysens S."/>
            <person name="Goldman G."/>
            <person name="de Groot P.W."/>
            <person name="Hansen K."/>
            <person name="Harris S.D."/>
            <person name="Heinekamp T."/>
            <person name="Helmstaedt K."/>
            <person name="Henrissat B."/>
            <person name="Hofmann G."/>
            <person name="Homan T."/>
            <person name="Horio T."/>
            <person name="Horiuchi H."/>
            <person name="James S."/>
            <person name="Jones M."/>
            <person name="Karaffa L."/>
            <person name="Karanyi Z."/>
            <person name="Kato M."/>
            <person name="Keller N."/>
            <person name="Kelly D.E."/>
            <person name="Kiel J.A."/>
            <person name="Kim J.M."/>
            <person name="van der Klei I.J."/>
            <person name="Klis F.M."/>
            <person name="Kovalchuk A."/>
            <person name="Krasevec N."/>
            <person name="Kubicek C.P."/>
            <person name="Liu B."/>
            <person name="Maccabe A."/>
            <person name="Meyer V."/>
            <person name="Mirabito P."/>
            <person name="Miskei M."/>
            <person name="Mos M."/>
            <person name="Mullins J."/>
            <person name="Nelson D.R."/>
            <person name="Nielsen J."/>
            <person name="Oakley B.R."/>
            <person name="Osmani S.A."/>
            <person name="Pakula T."/>
            <person name="Paszewski A."/>
            <person name="Paulsen I."/>
            <person name="Pilsyk S."/>
            <person name="Pocsi I."/>
            <person name="Punt P.J."/>
            <person name="Ram A.F."/>
            <person name="Ren Q."/>
            <person name="Robellet X."/>
            <person name="Robson G."/>
            <person name="Seiboth B."/>
            <person name="van Solingen P."/>
            <person name="Specht T."/>
            <person name="Sun J."/>
            <person name="Taheri-Talesh N."/>
            <person name="Takeshita N."/>
            <person name="Ussery D."/>
            <person name="vanKuyk P.A."/>
            <person name="Visser H."/>
            <person name="van de Vondervoort P.J."/>
            <person name="de Vries R.P."/>
            <person name="Walton J."/>
            <person name="Xiang X."/>
            <person name="Xiong Y."/>
            <person name="Zeng A.P."/>
            <person name="Brandt B.W."/>
            <person name="Cornell M.J."/>
            <person name="van den Hondel C.A."/>
            <person name="Visser J."/>
            <person name="Oliver S.G."/>
            <person name="Turner G."/>
        </authorList>
    </citation>
    <scope>GENOME REANNOTATION</scope>
    <source>
        <strain>FGSC A4 / ATCC 38163 / CBS 112.46 / NRRL 194 / M139</strain>
    </source>
</reference>
<comment type="function">
    <text evidence="1">RNA-binding nucleolar protein required for pre-rRNA processing. Involved in production of 18S rRNA and assembly of small ribosomal subunit (By similarity).</text>
</comment>
<comment type="subcellular location">
    <subcellularLocation>
        <location evidence="1">Nucleus</location>
        <location evidence="1">Nucleolus</location>
    </subcellularLocation>
</comment>
<comment type="similarity">
    <text evidence="3">Belongs to the NOP9 family.</text>
</comment>
<comment type="sequence caution" evidence="3">
    <conflict type="erroneous gene model prediction">
        <sequence resource="EMBL-CDS" id="EAA60963"/>
    </conflict>
</comment>
<keyword id="KW-0539">Nucleus</keyword>
<keyword id="KW-1185">Reference proteome</keyword>
<keyword id="KW-0677">Repeat</keyword>
<keyword id="KW-0690">Ribosome biogenesis</keyword>
<keyword id="KW-0698">rRNA processing</keyword>